<name>CAPSH_BPT4</name>
<gene>
    <name type="primary">gp23</name>
</gene>
<evidence type="ECO:0000255" key="1">
    <source>
        <dbReference type="HAMAP-Rule" id="MF_04117"/>
    </source>
</evidence>
<evidence type="ECO:0000269" key="2">
    <source>
    </source>
</evidence>
<evidence type="ECO:0000269" key="3">
    <source>
    </source>
</evidence>
<evidence type="ECO:0000269" key="4">
    <source>
    </source>
</evidence>
<evidence type="ECO:0000269" key="5">
    <source>
    </source>
</evidence>
<evidence type="ECO:0000269" key="6">
    <source>
    </source>
</evidence>
<evidence type="ECO:0000269" key="7">
    <source>
    </source>
</evidence>
<evidence type="ECO:0000269" key="8">
    <source>
    </source>
</evidence>
<evidence type="ECO:0000303" key="9">
    <source>
    </source>
</evidence>
<evidence type="ECO:0000303" key="10">
    <source>
    </source>
</evidence>
<evidence type="ECO:0000303" key="11">
    <source>
    </source>
</evidence>
<evidence type="ECO:0000305" key="12"/>
<evidence type="ECO:0000305" key="13">
    <source>
    </source>
</evidence>
<evidence type="ECO:0007829" key="14">
    <source>
        <dbReference type="PDB" id="5VF3"/>
    </source>
</evidence>
<evidence type="ECO:0007829" key="15">
    <source>
        <dbReference type="PDB" id="8T1X"/>
    </source>
</evidence>
<evidence type="ECO:0007829" key="16">
    <source>
        <dbReference type="PDB" id="8T9R"/>
    </source>
</evidence>
<accession>P04535</accession>
<accession>Q94N06</accession>
<dbReference type="EMBL" id="X01774">
    <property type="protein sequence ID" value="CAA25911.1"/>
    <property type="molecule type" value="Genomic_DNA"/>
</dbReference>
<dbReference type="EMBL" id="K01765">
    <property type="protein sequence ID" value="AAA32503.1"/>
    <property type="molecule type" value="Genomic_DNA"/>
</dbReference>
<dbReference type="EMBL" id="AF158101">
    <property type="protein sequence ID" value="AAD42428.1"/>
    <property type="molecule type" value="Genomic_DNA"/>
</dbReference>
<dbReference type="PIR" id="A92911">
    <property type="entry name" value="VHBPT4"/>
</dbReference>
<dbReference type="PDB" id="5VF3">
    <property type="method" value="EM"/>
    <property type="resolution" value="3.30 A"/>
    <property type="chains" value="A/B/C/D/E/F/G/H/I/J/K/L=66-521"/>
</dbReference>
<dbReference type="PDB" id="6UZC">
    <property type="method" value="EM"/>
    <property type="resolution" value="4.50 A"/>
    <property type="chains" value="A/B/C/D/a/b/c/d/e/f/g/h/i/j/k/l/m/n/o/p/q/r/s/t/u/v/w/x/y/z=1-521"/>
</dbReference>
<dbReference type="PDB" id="7VRT">
    <property type="method" value="EM"/>
    <property type="resolution" value="5.10 A"/>
    <property type="chains" value="aa/ab/ac/ad/ae/af/ag/ah/ai/aj/ak/al/am/an/ao/ap/aq/ar/as/at/au/av/aw/ax/ay/az/ba/bb/bc/bd=1-521"/>
</dbReference>
<dbReference type="PDB" id="7VS5">
    <property type="method" value="EM"/>
    <property type="resolution" value="3.40 A"/>
    <property type="chains" value="aa/ab/ac/ad/ae/af/ag/ah/ai/aj/ak/al/am/an/ao/ap/aq/ar/as/at/au/av/aw/ax/ay/az/ba/bb/bc/bd=1-521"/>
</dbReference>
<dbReference type="PDB" id="8GMO">
    <property type="method" value="EM"/>
    <property type="resolution" value="3.90 A"/>
    <property type="chains" value="0/1/2/3/4/5/6/7/8/9/AA/AB/AC/AD/AE/AF/AG/AH/AI/AJ/AK/AL/AM/AN/AO/AP/AQ/AR/AS/AT=66-521"/>
</dbReference>
<dbReference type="PDB" id="8T1X">
    <property type="method" value="EM"/>
    <property type="resolution" value="3.30 A"/>
    <property type="chains" value="A/B/C/D/E/F=66-521"/>
</dbReference>
<dbReference type="PDB" id="8T9R">
    <property type="method" value="EM"/>
    <property type="resolution" value="3.40 A"/>
    <property type="chains" value="A/B/C/D/E/F=66-521"/>
</dbReference>
<dbReference type="PDBsum" id="5VF3"/>
<dbReference type="PDBsum" id="6UZC"/>
<dbReference type="PDBsum" id="7VRT"/>
<dbReference type="PDBsum" id="7VS5"/>
<dbReference type="PDBsum" id="8GMO"/>
<dbReference type="PDBsum" id="8T1X"/>
<dbReference type="PDBsum" id="8T9R"/>
<dbReference type="EMDB" id="EMD-20956"/>
<dbReference type="EMDB" id="EMD-32103"/>
<dbReference type="EMDB" id="EMD-32109"/>
<dbReference type="EMDB" id="EMD-40228"/>
<dbReference type="EMDB" id="EMD-8661"/>
<dbReference type="SMR" id="P04535"/>
<dbReference type="DIP" id="DIP-59725N"/>
<dbReference type="IntAct" id="P04535">
    <property type="interactions" value="2"/>
</dbReference>
<dbReference type="KEGG" id="vg:1258751"/>
<dbReference type="OrthoDB" id="2241at10239"/>
<dbReference type="Proteomes" id="UP000009087">
    <property type="component" value="Segment"/>
</dbReference>
<dbReference type="GO" id="GO:0039621">
    <property type="term" value="C:T=13 icosahedral viral capsid"/>
    <property type="evidence" value="ECO:0007669"/>
    <property type="project" value="UniProtKB-KW"/>
</dbReference>
<dbReference type="GO" id="GO:0019028">
    <property type="term" value="C:viral capsid"/>
    <property type="evidence" value="ECO:0000314"/>
    <property type="project" value="CACAO"/>
</dbReference>
<dbReference type="HAMAP" id="MF_04117">
    <property type="entry name" value="CAPSID_H_T4"/>
    <property type="match status" value="1"/>
</dbReference>
<dbReference type="InterPro" id="IPR038997">
    <property type="entry name" value="CAPSID_Myoviridae"/>
</dbReference>
<dbReference type="InterPro" id="IPR010762">
    <property type="entry name" value="Gp23/Gp24_T4-like"/>
</dbReference>
<dbReference type="Pfam" id="PF07068">
    <property type="entry name" value="Gp23"/>
    <property type="match status" value="1"/>
</dbReference>
<organismHost>
    <name type="scientific">Escherichia coli</name>
    <dbReference type="NCBI Taxonomy" id="562"/>
</organismHost>
<comment type="function">
    <text evidence="1 2 3 4 7">Major capsid protein that self-associates to form hexamers, building most of the capsid in association with pentons made of the capsid vertex protein and one dodecamer of the portal protein. The major capsid protein self-associates to form 160 hexamers, building most of the T=13 laevo capsid. Folding of major capsid protein requires the assistance of two chaperones, the host chaperone groL acting with the phage encoded gp23-specific chaperone, gp31. The capsid also contains two nonessential outer capsid proteins, Hoc and Soc, which decorate the capsid surface. Through binding to adjacent gp23 subunits, Soc reinforces the capsid structure.</text>
</comment>
<comment type="subunit">
    <text evidence="1 3 5 6 8">Homohexamer. Interacts with the portal protein. Interacts with the capsid vertex protein that forms pentamers. Interacts with hoc; one hoc molecule associates with each capsid hexamer. Interacts with soc; this interaction reinforces the capsid structure. A total of 960 subunits of the major capsid protein forms the 160 hexamers.</text>
</comment>
<comment type="subcellular location">
    <molecule>Major capsid protein</molecule>
    <subcellularLocation>
        <location>Virion</location>
    </subcellularLocation>
    <text evidence="1 3 8">Part of the capsid icosahedric shell of the immature virion. The capsid is made of 930 copies arranged as 160 hexamers.</text>
</comment>
<comment type="subcellular location">
    <molecule>Mature major capsid protein</molecule>
    <subcellularLocation>
        <location>Virion</location>
    </subcellularLocation>
    <text evidence="1 3 4">Part of the icosahedric capsid shell of the mature virion.</text>
</comment>
<comment type="PTM">
    <text evidence="1 2 10">A proteolytic cleavage by the prohead core protein protease gives rise to the mature major capsid protein during virus maturation.</text>
</comment>
<comment type="similarity">
    <text evidence="1">Belongs to the Tevenvirinae major capsid protein family.</text>
</comment>
<organism>
    <name type="scientific">Enterobacteria phage T4</name>
    <name type="common">Bacteriophage T4</name>
    <dbReference type="NCBI Taxonomy" id="10665"/>
    <lineage>
        <taxon>Viruses</taxon>
        <taxon>Duplodnaviria</taxon>
        <taxon>Heunggongvirae</taxon>
        <taxon>Uroviricota</taxon>
        <taxon>Caudoviricetes</taxon>
        <taxon>Straboviridae</taxon>
        <taxon>Tevenvirinae</taxon>
        <taxon>Tequatrovirus</taxon>
    </lineage>
</organism>
<reference key="1">
    <citation type="journal article" date="1984" name="J. Mol. Biol.">
        <title>Nucleotide sequence of bacteriophage T4 gene 23 and the amino acid sequence of its product.</title>
        <authorList>
            <person name="Parker M.L."/>
            <person name="Christensen A.C."/>
            <person name="Boosman A."/>
            <person name="Stockard J."/>
            <person name="Young E.T."/>
            <person name="Doermann A.H."/>
        </authorList>
    </citation>
    <scope>NUCLEOTIDE SEQUENCE [GENOMIC DNA]</scope>
    <scope>PARTIAL PROTEIN SEQUENCE</scope>
    <source>
        <strain>D</strain>
    </source>
</reference>
<reference key="2">
    <citation type="journal article" date="2003" name="Microbiol. Mol. Biol. Rev.">
        <title>Bacteriophage T4 genome.</title>
        <authorList>
            <person name="Miller E.S."/>
            <person name="Kutter E."/>
            <person name="Mosig G."/>
            <person name="Arisaka F."/>
            <person name="Kunisawa T."/>
            <person name="Ruger W."/>
        </authorList>
    </citation>
    <scope>NUCLEOTIDE SEQUENCE [LARGE SCALE GENOMIC DNA]</scope>
</reference>
<reference key="3">
    <citation type="journal article" date="1984" name="J. Virol.">
        <title>Bacteriophage T4 gol site: sequence analysis and effects of the site on plasmid transformation.</title>
        <authorList>
            <person name="Champness W.C."/>
            <person name="Snyder L."/>
        </authorList>
    </citation>
    <scope>NUCLEOTIDE SEQUENCE [GENOMIC DNA] OF 48-138</scope>
</reference>
<reference key="4">
    <citation type="journal article" date="1987" name="Protein Seq. Data Anal.">
        <title>The amino acid sequence of crystalline sheets: a proteolytic fragment of the major head protein (gP23) of bacteriophage T4.</title>
        <authorList>
            <person name="Tsugita A."/>
            <person name="van den Broek R."/>
        </authorList>
    </citation>
    <scope>PROTEIN SEQUENCE OF 295-449</scope>
</reference>
<reference key="5">
    <citation type="journal article" date="1974" name="J. Supramol. Struct.">
        <title>The transformation of tau particles into T4 heads. II. Transformations of the surface lattice and related observations on form determination.</title>
        <authorList>
            <person name="Aebi U."/>
            <person name="Bijlenga R."/>
            <person name="van den Broek J."/>
            <person name="van den Broek H."/>
            <person name="Eiserling F."/>
            <person name="Kellenberger C."/>
            <person name="Kellenberger E."/>
            <person name="Mesyanzhinov V."/>
            <person name="Muller L."/>
            <person name="Showe M."/>
            <person name="Smith R."/>
            <person name="Steven A."/>
        </authorList>
    </citation>
    <scope>FUNCTION</scope>
</reference>
<reference key="6">
    <citation type="journal article" date="1976" name="Proc. Natl. Acad. Sci. U.S.A.">
        <title>Protein cleavage during virus assembly: a novel specificity of assembly dependent cleavage in bacteriophage T4.</title>
        <authorList>
            <person name="Isobe T."/>
            <person name="Black L.W."/>
            <person name="Tsugita A."/>
        </authorList>
    </citation>
    <scope>PROTEIN SEQUENCE OF 66-75</scope>
    <scope>PROTEOLYTIC CLEAVAGE</scope>
    <scope>FUNCTION</scope>
</reference>
<reference key="7">
    <citation type="journal article" date="1983" name="J. Mol. Biol.">
        <title>Gene 20 product of bacteriophage T4. II. Its structural organization in prehead and bacteriophage.</title>
        <authorList>
            <person name="Driedonks R.A."/>
            <person name="Caldentey J."/>
        </authorList>
    </citation>
    <scope>INTERACTION WITH THE PORTAL PROTEIN</scope>
    <scope>SUBCELLULAR LOCATION</scope>
</reference>
<reference key="8">
    <citation type="journal article" date="2001" name="Virology">
        <title>The structure of isometric capsids of bacteriophage T4.</title>
        <authorList>
            <person name="Olson N.H."/>
            <person name="Gingery M."/>
            <person name="Eiserling F.A."/>
            <person name="Baker T.S."/>
        </authorList>
    </citation>
    <scope>STRUCTURE BY ELECTRON MICROSCOPY (15.0 ANGSTROMS)</scope>
    <scope>INTERACTION WITH SOC</scope>
    <scope>INTERACTION WITH HOC</scope>
    <scope>FUNCTION</scope>
    <scope>SUBCELLULAR LOCATION</scope>
</reference>
<reference key="9">
    <citation type="journal article" date="2004" name="Proc. Natl. Acad. Sci. U.S.A.">
        <title>Molecular architecture of the prolate head of bacteriophage T4.</title>
        <authorList>
            <person name="Fokine A."/>
            <person name="Chipman P.R."/>
            <person name="Leiman P.G."/>
            <person name="Mesyanzhinov V.V."/>
            <person name="Rao V.B."/>
            <person name="Rossmann M.G."/>
        </authorList>
    </citation>
    <scope>STRUCTURE BY ELECTRON MICROSCOPY (22.0 ANGSTROMS)</scope>
    <scope>FUNCTION</scope>
    <scope>SUBCELLULAR LOCATION</scope>
</reference>
<reference key="10">
    <citation type="journal article" date="2005" name="Proc. Natl. Acad. Sci. U.S.A.">
        <title>The T4-encoded cochaperonin, gp31, has unique properties that explain its requirement for the folding of the T4 major capsid protein.</title>
        <authorList>
            <person name="Bakkes P.J."/>
            <person name="Faber B.W."/>
            <person name="van Heerikhuizen H."/>
            <person name="van der Vies S.M."/>
        </authorList>
    </citation>
    <scope>INTERACTION WITH HOST GROL</scope>
    <scope>INTERACTION WITH HOST GP31</scope>
</reference>
<reference key="11">
    <citation type="journal article" date="2010" name="Virol. J.">
        <title>Structure and assembly of bacteriophage T4 head.</title>
        <authorList>
            <person name="Rao V.B."/>
            <person name="Black L.W."/>
        </authorList>
    </citation>
    <scope>REVIEW</scope>
</reference>
<reference key="12">
    <citation type="journal article" date="2022" name="Viruses">
        <title>The Beauty of Bacteriophage T4 Research: Lindsay W. Black and the T4 Head Assembly.</title>
        <authorList>
            <person name="Kuhn A."/>
            <person name="Thomas J.A."/>
        </authorList>
    </citation>
    <scope>PROTEOLYTIC CLEAVAGE</scope>
</reference>
<reference key="13">
    <citation type="journal article" date="2012" name="PLoS ONE">
        <title>Recombinant expression and purification of T4 phage Hoc, Soc, gp23, gp24 proteins in native conformations with stability studies.</title>
        <authorList>
            <person name="Miernikiewicz P."/>
            <person name="Owczarek B."/>
            <person name="Piotrowicz A."/>
            <person name="Boczkowska B."/>
            <person name="Rzewucka K."/>
            <person name="Figura G."/>
            <person name="Letarov A."/>
            <person name="Kulikov E."/>
            <person name="Kopciuch A."/>
            <person name="Switala-Jelen K."/>
            <person name="Oslizlo A."/>
            <person name="Hodyra K."/>
            <person name="Gubernator J."/>
            <person name="Dabrowska K."/>
        </authorList>
    </citation>
    <scope>3D-STRUCTURE MODELING OF 74-521</scope>
    <scope>INTERACTION WITH THE CAPSID VERTEX PROTEIN</scope>
    <scope>INTERACTION WITH HOC</scope>
    <scope>INTERACTION WITH SOC</scope>
</reference>
<proteinExistence type="evidence at protein level"/>
<protein>
    <recommendedName>
        <fullName evidence="1 11">Major capsid protein</fullName>
    </recommendedName>
    <alternativeName>
        <fullName evidence="11">Gene product 23</fullName>
    </alternativeName>
    <alternativeName>
        <fullName evidence="1 12">Major head protein</fullName>
    </alternativeName>
    <alternativeName>
        <fullName evidence="1 11">gp23</fullName>
    </alternativeName>
    <component>
        <recommendedName>
            <fullName evidence="1 12">Mature major capsid protein</fullName>
        </recommendedName>
        <alternativeName>
            <fullName evidence="1 9">gp23*</fullName>
        </alternativeName>
    </component>
</protein>
<sequence length="521" mass="56022">MTIKTKAELLNKWKPLLEGEGLPEIANSKQAIIAKIFENQEKDFQTAPEYKDEKIAQAFGSFLTEAEIGGDHGYNATNIAAGQTSGAVTQIGPAVMGMVRRAIPNLIAFDICGVQPMNSPTGQVFALRAVYGKDPVAAGAKEAFHPMYGPDAMFSGQGAAKKFPALAASTQTTVGDIYTHFFQETGTVYLQASVQVTIDAGATDAAKLDAEIKKQMEAGALVEIAEGMATSIAELQEGFNGSTDNPWNEMGFRIDKQVIEAKSRQLKAAYSIELAQDLRAVHGMDADAELSGILATEIMLEINREVVDWINYSAQVGKSGMTLTPGSKAGVFDFQDPIDIRGARWAGESFKALLFQIDKEAVEIARQTGRGEGNFIIASRNVVNVLASVDTGISYAAQGLATGFSTDTTKSVFAGVLGGKYRVYIDQYAKQDYFTVGYKGPNEMDAGIYYAPYVALTPLRGSDPKNFQPVMGFKTRYGIGINPFAESAAQAPASRIQSGMPSILNSLGKNAYFRRVYVKGI</sequence>
<feature type="chain" id="PRO_0000164921" description="Major capsid protein">
    <location>
        <begin position="1"/>
        <end position="521"/>
    </location>
</feature>
<feature type="chain" id="PRO_0000430196" description="Mature major capsid protein" evidence="13">
    <location>
        <begin position="66"/>
        <end position="521"/>
    </location>
</feature>
<feature type="site" description="Cleavage" evidence="1 2">
    <location>
        <begin position="65"/>
        <end position="66"/>
    </location>
</feature>
<feature type="sequence conflict" description="In Ref. 4; AA sequence." evidence="12" ref="4">
    <original>N</original>
    <variation>D</variation>
    <location>
        <position position="311"/>
    </location>
</feature>
<feature type="sequence conflict" description="In Ref. 1; AAA32503." evidence="12" ref="1">
    <original>S</original>
    <variation>N</variation>
    <location>
        <position position="405"/>
    </location>
</feature>
<feature type="helix" evidence="14">
    <location>
        <begin position="76"/>
        <end position="81"/>
    </location>
</feature>
<feature type="strand" evidence="14">
    <location>
        <begin position="85"/>
        <end position="87"/>
    </location>
</feature>
<feature type="strand" evidence="14">
    <location>
        <begin position="98"/>
        <end position="100"/>
    </location>
</feature>
<feature type="strand" evidence="15">
    <location>
        <begin position="109"/>
        <end position="113"/>
    </location>
</feature>
<feature type="strand" evidence="14">
    <location>
        <begin position="118"/>
        <end position="121"/>
    </location>
</feature>
<feature type="strand" evidence="14">
    <location>
        <begin position="123"/>
        <end position="127"/>
    </location>
</feature>
<feature type="strand" evidence="14">
    <location>
        <begin position="129"/>
        <end position="133"/>
    </location>
</feature>
<feature type="strand" evidence="14">
    <location>
        <begin position="135"/>
        <end position="137"/>
    </location>
</feature>
<feature type="strand" evidence="14">
    <location>
        <begin position="142"/>
        <end position="144"/>
    </location>
</feature>
<feature type="strand" evidence="14">
    <location>
        <begin position="146"/>
        <end position="148"/>
    </location>
</feature>
<feature type="strand" evidence="14">
    <location>
        <begin position="152"/>
        <end position="156"/>
    </location>
</feature>
<feature type="helix" evidence="14">
    <location>
        <begin position="157"/>
        <end position="160"/>
    </location>
</feature>
<feature type="strand" evidence="14">
    <location>
        <begin position="177"/>
        <end position="181"/>
    </location>
</feature>
<feature type="strand" evidence="14">
    <location>
        <begin position="183"/>
        <end position="185"/>
    </location>
</feature>
<feature type="strand" evidence="14">
    <location>
        <begin position="187"/>
        <end position="194"/>
    </location>
</feature>
<feature type="helix" evidence="14">
    <location>
        <begin position="205"/>
        <end position="217"/>
    </location>
</feature>
<feature type="strand" evidence="14">
    <location>
        <begin position="220"/>
        <end position="224"/>
    </location>
</feature>
<feature type="helix" evidence="14">
    <location>
        <begin position="230"/>
        <end position="234"/>
    </location>
</feature>
<feature type="strand" evidence="14">
    <location>
        <begin position="237"/>
        <end position="239"/>
    </location>
</feature>
<feature type="strand" evidence="14">
    <location>
        <begin position="249"/>
        <end position="252"/>
    </location>
</feature>
<feature type="strand" evidence="14">
    <location>
        <begin position="255"/>
        <end position="258"/>
    </location>
</feature>
<feature type="strand" evidence="14">
    <location>
        <begin position="263"/>
        <end position="267"/>
    </location>
</feature>
<feature type="helix" evidence="14">
    <location>
        <begin position="272"/>
        <end position="282"/>
    </location>
</feature>
<feature type="helix" evidence="14">
    <location>
        <begin position="290"/>
        <end position="313"/>
    </location>
</feature>
<feature type="strand" evidence="14">
    <location>
        <begin position="314"/>
        <end position="318"/>
    </location>
</feature>
<feature type="helix" evidence="14">
    <location>
        <begin position="320"/>
        <end position="322"/>
    </location>
</feature>
<feature type="strand" evidence="14">
    <location>
        <begin position="329"/>
        <end position="333"/>
    </location>
</feature>
<feature type="turn" evidence="14">
    <location>
        <begin position="337"/>
        <end position="342"/>
    </location>
</feature>
<feature type="helix" evidence="14">
    <location>
        <begin position="347"/>
        <end position="367"/>
    </location>
</feature>
<feature type="strand" evidence="14">
    <location>
        <begin position="375"/>
        <end position="378"/>
    </location>
</feature>
<feature type="helix" evidence="14">
    <location>
        <begin position="380"/>
        <end position="387"/>
    </location>
</feature>
<feature type="strand" evidence="15">
    <location>
        <begin position="392"/>
        <end position="395"/>
    </location>
</feature>
<feature type="strand" evidence="14">
    <location>
        <begin position="407"/>
        <end position="410"/>
    </location>
</feature>
<feature type="strand" evidence="14">
    <location>
        <begin position="412"/>
        <end position="417"/>
    </location>
</feature>
<feature type="turn" evidence="14">
    <location>
        <begin position="418"/>
        <end position="420"/>
    </location>
</feature>
<feature type="strand" evidence="14">
    <location>
        <begin position="421"/>
        <end position="425"/>
    </location>
</feature>
<feature type="strand" evidence="14">
    <location>
        <begin position="434"/>
        <end position="436"/>
    </location>
</feature>
<feature type="strand" evidence="14">
    <location>
        <begin position="446"/>
        <end position="450"/>
    </location>
</feature>
<feature type="strand" evidence="14">
    <location>
        <begin position="453"/>
        <end position="462"/>
    </location>
</feature>
<feature type="turn" evidence="14">
    <location>
        <begin position="464"/>
        <end position="466"/>
    </location>
</feature>
<feature type="strand" evidence="14">
    <location>
        <begin position="469"/>
        <end position="476"/>
    </location>
</feature>
<feature type="strand" evidence="14">
    <location>
        <begin position="479"/>
        <end position="481"/>
    </location>
</feature>
<feature type="strand" evidence="16">
    <location>
        <begin position="488"/>
        <end position="491"/>
    </location>
</feature>
<feature type="strand" evidence="14">
    <location>
        <begin position="493"/>
        <end position="498"/>
    </location>
</feature>
<feature type="helix" evidence="14">
    <location>
        <begin position="503"/>
        <end position="506"/>
    </location>
</feature>
<feature type="strand" evidence="14">
    <location>
        <begin position="510"/>
        <end position="519"/>
    </location>
</feature>
<keyword id="KW-0002">3D-structure</keyword>
<keyword id="KW-0167">Capsid protein</keyword>
<keyword id="KW-0903">Direct protein sequencing</keyword>
<keyword id="KW-0426">Late protein</keyword>
<keyword id="KW-1185">Reference proteome</keyword>
<keyword id="KW-1146">T=13 icosahedral capsid protein</keyword>
<keyword id="KW-0946">Virion</keyword>